<comment type="function">
    <text evidence="1">Key component of the proton channel; it plays a direct role in the translocation of protons across the membrane.</text>
</comment>
<comment type="subunit">
    <text evidence="1">F-type ATPases have 2 components, CF(1) - the catalytic core - and CF(0) - the membrane proton channel. CF(1) has five subunits: alpha(3), beta(3), gamma(1), delta(1), epsilon(1). CF(0) has three main subunits: a(1), b(2) and c(9-12). The alpha and beta chains form an alternating ring which encloses part of the gamma chain. CF(1) is attached to CF(0) by a central stalk formed by the gamma and epsilon chains, while a peripheral stalk is formed by the delta and b chains.</text>
</comment>
<comment type="subcellular location">
    <subcellularLocation>
        <location evidence="1">Cell membrane</location>
        <topology evidence="1">Multi-pass membrane protein</topology>
    </subcellularLocation>
</comment>
<comment type="similarity">
    <text evidence="1">Belongs to the ATPase A chain family.</text>
</comment>
<accession>C1CF98</accession>
<protein>
    <recommendedName>
        <fullName evidence="1">ATP synthase subunit a</fullName>
    </recommendedName>
    <alternativeName>
        <fullName evidence="1">ATP synthase F0 sector subunit a</fullName>
    </alternativeName>
    <alternativeName>
        <fullName evidence="1">F-ATPase subunit 6</fullName>
    </alternativeName>
</protein>
<sequence>MEESINPIISIGPVIFNLTMLAMTLLIVGVIFVFIYWASRNMTLKPKGKQNVLEYVYDFVIGFTEPNIGSRYMKDYSLFFLCLFLFMVIANNLGLMTKLQTIDGTNWWSSPTANLQYDLTLSFLVILLTHIESVRRRGFKKSIKSFMSPVFVIPMNILEEFTNFLSLALRIFGNIFAGEVMTSLLLLLSHQAIYWYPVAFGANLAWTAFSVFISCIQAYVFTLLTSVYLGNKINIEEE</sequence>
<evidence type="ECO:0000255" key="1">
    <source>
        <dbReference type="HAMAP-Rule" id="MF_01393"/>
    </source>
</evidence>
<name>ATP6_STRZJ</name>
<dbReference type="EMBL" id="CP000919">
    <property type="protein sequence ID" value="ACO19386.1"/>
    <property type="molecule type" value="Genomic_DNA"/>
</dbReference>
<dbReference type="RefSeq" id="WP_000392851.1">
    <property type="nucleotide sequence ID" value="NC_012466.1"/>
</dbReference>
<dbReference type="SMR" id="C1CF98"/>
<dbReference type="GeneID" id="45653248"/>
<dbReference type="KEGG" id="sjj:SPJ_1415"/>
<dbReference type="HOGENOM" id="CLU_041018_2_3_9"/>
<dbReference type="Proteomes" id="UP000002206">
    <property type="component" value="Chromosome"/>
</dbReference>
<dbReference type="GO" id="GO:0005886">
    <property type="term" value="C:plasma membrane"/>
    <property type="evidence" value="ECO:0007669"/>
    <property type="project" value="UniProtKB-SubCell"/>
</dbReference>
<dbReference type="GO" id="GO:0045259">
    <property type="term" value="C:proton-transporting ATP synthase complex"/>
    <property type="evidence" value="ECO:0007669"/>
    <property type="project" value="UniProtKB-KW"/>
</dbReference>
<dbReference type="GO" id="GO:0046933">
    <property type="term" value="F:proton-transporting ATP synthase activity, rotational mechanism"/>
    <property type="evidence" value="ECO:0007669"/>
    <property type="project" value="UniProtKB-UniRule"/>
</dbReference>
<dbReference type="GO" id="GO:0042777">
    <property type="term" value="P:proton motive force-driven plasma membrane ATP synthesis"/>
    <property type="evidence" value="ECO:0007669"/>
    <property type="project" value="TreeGrafter"/>
</dbReference>
<dbReference type="CDD" id="cd00310">
    <property type="entry name" value="ATP-synt_Fo_a_6"/>
    <property type="match status" value="1"/>
</dbReference>
<dbReference type="Gene3D" id="1.20.120.220">
    <property type="entry name" value="ATP synthase, F0 complex, subunit A"/>
    <property type="match status" value="1"/>
</dbReference>
<dbReference type="HAMAP" id="MF_01393">
    <property type="entry name" value="ATP_synth_a_bact"/>
    <property type="match status" value="1"/>
</dbReference>
<dbReference type="InterPro" id="IPR045082">
    <property type="entry name" value="ATP_syn_F0_a_bact/chloroplast"/>
</dbReference>
<dbReference type="InterPro" id="IPR000568">
    <property type="entry name" value="ATP_synth_F0_asu"/>
</dbReference>
<dbReference type="InterPro" id="IPR035908">
    <property type="entry name" value="F0_ATP_A_sf"/>
</dbReference>
<dbReference type="NCBIfam" id="TIGR01131">
    <property type="entry name" value="ATP_synt_6_or_A"/>
    <property type="match status" value="1"/>
</dbReference>
<dbReference type="NCBIfam" id="NF004479">
    <property type="entry name" value="PRK05815.1-4"/>
    <property type="match status" value="1"/>
</dbReference>
<dbReference type="PANTHER" id="PTHR42823">
    <property type="entry name" value="ATP SYNTHASE SUBUNIT A, CHLOROPLASTIC"/>
    <property type="match status" value="1"/>
</dbReference>
<dbReference type="PANTHER" id="PTHR42823:SF3">
    <property type="entry name" value="ATP SYNTHASE SUBUNIT A, CHLOROPLASTIC"/>
    <property type="match status" value="1"/>
</dbReference>
<dbReference type="Pfam" id="PF00119">
    <property type="entry name" value="ATP-synt_A"/>
    <property type="match status" value="1"/>
</dbReference>
<dbReference type="PRINTS" id="PR00123">
    <property type="entry name" value="ATPASEA"/>
</dbReference>
<dbReference type="SUPFAM" id="SSF81336">
    <property type="entry name" value="F1F0 ATP synthase subunit A"/>
    <property type="match status" value="1"/>
</dbReference>
<organism>
    <name type="scientific">Streptococcus pneumoniae (strain JJA)</name>
    <dbReference type="NCBI Taxonomy" id="488222"/>
    <lineage>
        <taxon>Bacteria</taxon>
        <taxon>Bacillati</taxon>
        <taxon>Bacillota</taxon>
        <taxon>Bacilli</taxon>
        <taxon>Lactobacillales</taxon>
        <taxon>Streptococcaceae</taxon>
        <taxon>Streptococcus</taxon>
    </lineage>
</organism>
<keyword id="KW-0066">ATP synthesis</keyword>
<keyword id="KW-1003">Cell membrane</keyword>
<keyword id="KW-0138">CF(0)</keyword>
<keyword id="KW-0375">Hydrogen ion transport</keyword>
<keyword id="KW-0406">Ion transport</keyword>
<keyword id="KW-0472">Membrane</keyword>
<keyword id="KW-0812">Transmembrane</keyword>
<keyword id="KW-1133">Transmembrane helix</keyword>
<keyword id="KW-0813">Transport</keyword>
<reference key="1">
    <citation type="journal article" date="2010" name="Genome Biol.">
        <title>Structure and dynamics of the pan-genome of Streptococcus pneumoniae and closely related species.</title>
        <authorList>
            <person name="Donati C."/>
            <person name="Hiller N.L."/>
            <person name="Tettelin H."/>
            <person name="Muzzi A."/>
            <person name="Croucher N.J."/>
            <person name="Angiuoli S.V."/>
            <person name="Oggioni M."/>
            <person name="Dunning Hotopp J.C."/>
            <person name="Hu F.Z."/>
            <person name="Riley D.R."/>
            <person name="Covacci A."/>
            <person name="Mitchell T.J."/>
            <person name="Bentley S.D."/>
            <person name="Kilian M."/>
            <person name="Ehrlich G.D."/>
            <person name="Rappuoli R."/>
            <person name="Moxon E.R."/>
            <person name="Masignani V."/>
        </authorList>
    </citation>
    <scope>NUCLEOTIDE SEQUENCE [LARGE SCALE GENOMIC DNA]</scope>
    <source>
        <strain>JJA</strain>
    </source>
</reference>
<gene>
    <name evidence="1" type="primary">atpB</name>
    <name type="ordered locus">SPJ_1415</name>
</gene>
<feature type="chain" id="PRO_1000184294" description="ATP synthase subunit a">
    <location>
        <begin position="1"/>
        <end position="238"/>
    </location>
</feature>
<feature type="transmembrane region" description="Helical" evidence="1">
    <location>
        <begin position="15"/>
        <end position="35"/>
    </location>
</feature>
<feature type="transmembrane region" description="Helical" evidence="1">
    <location>
        <begin position="76"/>
        <end position="96"/>
    </location>
</feature>
<feature type="transmembrane region" description="Helical" evidence="1">
    <location>
        <begin position="111"/>
        <end position="131"/>
    </location>
</feature>
<feature type="transmembrane region" description="Helical" evidence="1">
    <location>
        <begin position="167"/>
        <end position="187"/>
    </location>
</feature>
<feature type="transmembrane region" description="Helical" evidence="1">
    <location>
        <begin position="208"/>
        <end position="230"/>
    </location>
</feature>
<proteinExistence type="inferred from homology"/>